<dbReference type="EC" id="2.7.11.1"/>
<dbReference type="EC" id="3.6.1.-" evidence="1"/>
<dbReference type="EMBL" id="L77117">
    <property type="protein sequence ID" value="AAB98431.1"/>
    <property type="molecule type" value="Genomic_DNA"/>
</dbReference>
<dbReference type="PIR" id="D64355">
    <property type="entry name" value="D64355"/>
</dbReference>
<dbReference type="SMR" id="Q57886"/>
<dbReference type="FunCoup" id="Q57886">
    <property type="interactions" value="14"/>
</dbReference>
<dbReference type="STRING" id="243232.MJ_0444"/>
<dbReference type="PaxDb" id="243232-MJ_0444"/>
<dbReference type="EnsemblBacteria" id="AAB98431">
    <property type="protein sequence ID" value="AAB98431"/>
    <property type="gene ID" value="MJ_0444"/>
</dbReference>
<dbReference type="KEGG" id="mja:MJ_0444"/>
<dbReference type="eggNOG" id="arCOG01180">
    <property type="taxonomic scope" value="Archaea"/>
</dbReference>
<dbReference type="HOGENOM" id="CLU_018693_3_3_2"/>
<dbReference type="InParanoid" id="Q57886"/>
<dbReference type="PhylomeDB" id="Q57886"/>
<dbReference type="Proteomes" id="UP000000805">
    <property type="component" value="Chromosome"/>
</dbReference>
<dbReference type="GO" id="GO:0005524">
    <property type="term" value="F:ATP binding"/>
    <property type="evidence" value="ECO:0007669"/>
    <property type="project" value="UniProtKB-KW"/>
</dbReference>
<dbReference type="GO" id="GO:0016787">
    <property type="term" value="F:hydrolase activity"/>
    <property type="evidence" value="ECO:0007669"/>
    <property type="project" value="UniProtKB-KW"/>
</dbReference>
<dbReference type="GO" id="GO:0046872">
    <property type="term" value="F:metal ion binding"/>
    <property type="evidence" value="ECO:0007669"/>
    <property type="project" value="UniProtKB-KW"/>
</dbReference>
<dbReference type="GO" id="GO:0106310">
    <property type="term" value="F:protein serine kinase activity"/>
    <property type="evidence" value="ECO:0007669"/>
    <property type="project" value="RHEA"/>
</dbReference>
<dbReference type="GO" id="GO:0004674">
    <property type="term" value="F:protein serine/threonine kinase activity"/>
    <property type="evidence" value="ECO:0007669"/>
    <property type="project" value="UniProtKB-KW"/>
</dbReference>
<dbReference type="CDD" id="cd05145">
    <property type="entry name" value="RIO1_like"/>
    <property type="match status" value="1"/>
</dbReference>
<dbReference type="Gene3D" id="3.30.200.20">
    <property type="entry name" value="Phosphorylase Kinase, domain 1"/>
    <property type="match status" value="1"/>
</dbReference>
<dbReference type="Gene3D" id="1.10.510.10">
    <property type="entry name" value="Transferase(Phosphotransferase) domain 1"/>
    <property type="match status" value="1"/>
</dbReference>
<dbReference type="InterPro" id="IPR011009">
    <property type="entry name" value="Kinase-like_dom_sf"/>
</dbReference>
<dbReference type="InterPro" id="IPR000719">
    <property type="entry name" value="Prot_kinase_dom"/>
</dbReference>
<dbReference type="InterPro" id="IPR051272">
    <property type="entry name" value="RIO-type_Ser/Thr_kinase"/>
</dbReference>
<dbReference type="InterPro" id="IPR018934">
    <property type="entry name" value="RIO_dom"/>
</dbReference>
<dbReference type="InterPro" id="IPR000687">
    <property type="entry name" value="RIO_kinase"/>
</dbReference>
<dbReference type="InterPro" id="IPR018935">
    <property type="entry name" value="RIO_kinase_CS"/>
</dbReference>
<dbReference type="InterPro" id="IPR008266">
    <property type="entry name" value="Tyr_kinase_AS"/>
</dbReference>
<dbReference type="PANTHER" id="PTHR45723">
    <property type="entry name" value="SERINE/THREONINE-PROTEIN KINASE RIO1"/>
    <property type="match status" value="1"/>
</dbReference>
<dbReference type="Pfam" id="PF01163">
    <property type="entry name" value="RIO1"/>
    <property type="match status" value="1"/>
</dbReference>
<dbReference type="SMART" id="SM00090">
    <property type="entry name" value="RIO"/>
    <property type="match status" value="1"/>
</dbReference>
<dbReference type="SUPFAM" id="SSF56112">
    <property type="entry name" value="Protein kinase-like (PK-like)"/>
    <property type="match status" value="1"/>
</dbReference>
<dbReference type="PROSITE" id="PS50011">
    <property type="entry name" value="PROTEIN_KINASE_DOM"/>
    <property type="match status" value="1"/>
</dbReference>
<dbReference type="PROSITE" id="PS01245">
    <property type="entry name" value="RIO1"/>
    <property type="match status" value="1"/>
</dbReference>
<protein>
    <recommendedName>
        <fullName>RIO-type serine/threonine-protein kinase Rio1</fullName>
        <ecNumber>2.7.11.1</ecNumber>
        <ecNumber evidence="1">3.6.1.-</ecNumber>
    </recommendedName>
</protein>
<gene>
    <name type="primary">rio1</name>
    <name type="ordered locus">MJ0444</name>
</gene>
<reference key="1">
    <citation type="journal article" date="1996" name="Science">
        <title>Complete genome sequence of the methanogenic archaeon, Methanococcus jannaschii.</title>
        <authorList>
            <person name="Bult C.J."/>
            <person name="White O."/>
            <person name="Olsen G.J."/>
            <person name="Zhou L."/>
            <person name="Fleischmann R.D."/>
            <person name="Sutton G.G."/>
            <person name="Blake J.A."/>
            <person name="FitzGerald L.M."/>
            <person name="Clayton R.A."/>
            <person name="Gocayne J.D."/>
            <person name="Kerlavage A.R."/>
            <person name="Dougherty B.A."/>
            <person name="Tomb J.-F."/>
            <person name="Adams M.D."/>
            <person name="Reich C.I."/>
            <person name="Overbeek R."/>
            <person name="Kirkness E.F."/>
            <person name="Weinstock K.G."/>
            <person name="Merrick J.M."/>
            <person name="Glodek A."/>
            <person name="Scott J.L."/>
            <person name="Geoghagen N.S.M."/>
            <person name="Weidman J.F."/>
            <person name="Fuhrmann J.L."/>
            <person name="Nguyen D."/>
            <person name="Utterback T.R."/>
            <person name="Kelley J.M."/>
            <person name="Peterson J.D."/>
            <person name="Sadow P.W."/>
            <person name="Hanna M.C."/>
            <person name="Cotton M.D."/>
            <person name="Roberts K.M."/>
            <person name="Hurst M.A."/>
            <person name="Kaine B.P."/>
            <person name="Borodovsky M."/>
            <person name="Klenk H.-P."/>
            <person name="Fraser C.M."/>
            <person name="Smith H.O."/>
            <person name="Woese C.R."/>
            <person name="Venter J.C."/>
        </authorList>
    </citation>
    <scope>NUCLEOTIDE SEQUENCE [LARGE SCALE GENOMIC DNA]</scope>
    <source>
        <strain>ATCC 43067 / DSM 2661 / JAL-1 / JCM 10045 / NBRC 100440</strain>
    </source>
</reference>
<feature type="chain" id="PRO_0000213534" description="RIO-type serine/threonine-protein kinase Rio1">
    <location>
        <begin position="1"/>
        <end position="290"/>
    </location>
</feature>
<feature type="domain" description="Protein kinase" evidence="3">
    <location>
        <begin position="76"/>
        <end position="290"/>
    </location>
</feature>
<feature type="active site" description="Proton acceptor" evidence="2 3">
    <location>
        <position position="214"/>
    </location>
</feature>
<feature type="active site" description="4-aspartylphosphate intermediate" evidence="2">
    <location>
        <position position="231"/>
    </location>
</feature>
<feature type="binding site" evidence="3">
    <location>
        <begin position="82"/>
        <end position="90"/>
    </location>
    <ligand>
        <name>ATP</name>
        <dbReference type="ChEBI" id="CHEBI:30616"/>
    </ligand>
</feature>
<feature type="binding site" evidence="3">
    <location>
        <position position="103"/>
    </location>
    <ligand>
        <name>ATP</name>
        <dbReference type="ChEBI" id="CHEBI:30616"/>
    </ligand>
</feature>
<feature type="binding site" evidence="2">
    <location>
        <position position="219"/>
    </location>
    <ligand>
        <name>Mg(2+)</name>
        <dbReference type="ChEBI" id="CHEBI:18420"/>
    </ligand>
</feature>
<feature type="binding site" evidence="2">
    <location>
        <position position="231"/>
    </location>
    <ligand>
        <name>Mg(2+)</name>
        <dbReference type="ChEBI" id="CHEBI:18420"/>
    </ligand>
</feature>
<accession>Q57886</accession>
<sequence>MSCYKVMPIAKNIDDELYELNKLLSEKEEFQLDREYQKEILEKERKFLEDLKTANEVFDKRTLMTLFSLLAGKHLTEYIGIVNSGKEAVVFKARKGKFYRAVKVYRVATCDFKTMSKYIQGDPRFHLRKSSRRQIIHAWVEKEFRNLRRASEIINAPKARLRRENVLVMDFVGYRGIPAPKLKDMQDLDWEKYFKIIKESMKKLYEEGELVHGDLSEYNILVKDDEPVFIDFSQSVITQHPLAHPLLIRDCINICNFFRRKRVDCNYKDLYKYITGKEIDPIDEAMIKQL</sequence>
<comment type="function">
    <text evidence="1">Despite the protein kinase domain is proposed to act predominantly as an ATPase (By similarity).</text>
</comment>
<comment type="catalytic activity">
    <reaction>
        <text>L-seryl-[protein] + ATP = O-phospho-L-seryl-[protein] + ADP + H(+)</text>
        <dbReference type="Rhea" id="RHEA:17989"/>
        <dbReference type="Rhea" id="RHEA-COMP:9863"/>
        <dbReference type="Rhea" id="RHEA-COMP:11604"/>
        <dbReference type="ChEBI" id="CHEBI:15378"/>
        <dbReference type="ChEBI" id="CHEBI:29999"/>
        <dbReference type="ChEBI" id="CHEBI:30616"/>
        <dbReference type="ChEBI" id="CHEBI:83421"/>
        <dbReference type="ChEBI" id="CHEBI:456216"/>
        <dbReference type="EC" id="2.7.11.1"/>
    </reaction>
</comment>
<comment type="catalytic activity">
    <reaction>
        <text>L-threonyl-[protein] + ATP = O-phospho-L-threonyl-[protein] + ADP + H(+)</text>
        <dbReference type="Rhea" id="RHEA:46608"/>
        <dbReference type="Rhea" id="RHEA-COMP:11060"/>
        <dbReference type="Rhea" id="RHEA-COMP:11605"/>
        <dbReference type="ChEBI" id="CHEBI:15378"/>
        <dbReference type="ChEBI" id="CHEBI:30013"/>
        <dbReference type="ChEBI" id="CHEBI:30616"/>
        <dbReference type="ChEBI" id="CHEBI:61977"/>
        <dbReference type="ChEBI" id="CHEBI:456216"/>
        <dbReference type="EC" id="2.7.11.1"/>
    </reaction>
</comment>
<comment type="catalytic activity">
    <reaction evidence="1">
        <text>ATP + H2O = ADP + phosphate + H(+)</text>
        <dbReference type="Rhea" id="RHEA:13065"/>
        <dbReference type="ChEBI" id="CHEBI:15377"/>
        <dbReference type="ChEBI" id="CHEBI:15378"/>
        <dbReference type="ChEBI" id="CHEBI:30616"/>
        <dbReference type="ChEBI" id="CHEBI:43474"/>
        <dbReference type="ChEBI" id="CHEBI:456216"/>
    </reaction>
</comment>
<comment type="similarity">
    <text evidence="4">Belongs to the protein kinase superfamily. RIO-type Ser/Thr kinase family.</text>
</comment>
<name>RIO1_METJA</name>
<keyword id="KW-0067">ATP-binding</keyword>
<keyword id="KW-0378">Hydrolase</keyword>
<keyword id="KW-0418">Kinase</keyword>
<keyword id="KW-0460">Magnesium</keyword>
<keyword id="KW-0479">Metal-binding</keyword>
<keyword id="KW-0547">Nucleotide-binding</keyword>
<keyword id="KW-1185">Reference proteome</keyword>
<keyword id="KW-0723">Serine/threonine-protein kinase</keyword>
<keyword id="KW-0808">Transferase</keyword>
<evidence type="ECO:0000250" key="1">
    <source>
        <dbReference type="UniProtKB" id="G0S3J5"/>
    </source>
</evidence>
<evidence type="ECO:0000250" key="2">
    <source>
        <dbReference type="UniProtKB" id="Q9BRS2"/>
    </source>
</evidence>
<evidence type="ECO:0000255" key="3">
    <source>
        <dbReference type="PROSITE-ProRule" id="PRU00159"/>
    </source>
</evidence>
<evidence type="ECO:0000305" key="4"/>
<proteinExistence type="inferred from homology"/>
<organism>
    <name type="scientific">Methanocaldococcus jannaschii (strain ATCC 43067 / DSM 2661 / JAL-1 / JCM 10045 / NBRC 100440)</name>
    <name type="common">Methanococcus jannaschii</name>
    <dbReference type="NCBI Taxonomy" id="243232"/>
    <lineage>
        <taxon>Archaea</taxon>
        <taxon>Methanobacteriati</taxon>
        <taxon>Methanobacteriota</taxon>
        <taxon>Methanomada group</taxon>
        <taxon>Methanococci</taxon>
        <taxon>Methanococcales</taxon>
        <taxon>Methanocaldococcaceae</taxon>
        <taxon>Methanocaldococcus</taxon>
    </lineage>
</organism>